<dbReference type="EC" id="2.4.2.41"/>
<dbReference type="EMBL" id="AC051625">
    <property type="status" value="NOT_ANNOTATED_CDS"/>
    <property type="molecule type" value="Genomic_DNA"/>
</dbReference>
<dbReference type="EMBL" id="CP002688">
    <property type="protein sequence ID" value="AED93892.1"/>
    <property type="molecule type" value="Genomic_DNA"/>
</dbReference>
<dbReference type="EMBL" id="AY049234">
    <property type="protein sequence ID" value="AAK83577.1"/>
    <property type="status" value="ALT_SEQ"/>
    <property type="molecule type" value="mRNA"/>
</dbReference>
<dbReference type="EMBL" id="AY072629">
    <property type="protein sequence ID" value="AAL62020.1"/>
    <property type="molecule type" value="mRNA"/>
</dbReference>
<dbReference type="EMBL" id="BX831739">
    <property type="status" value="NOT_ANNOTATED_CDS"/>
    <property type="molecule type" value="mRNA"/>
</dbReference>
<dbReference type="RefSeq" id="NP_198314.2">
    <property type="nucleotide sequence ID" value="NM_122853.4"/>
</dbReference>
<dbReference type="BioGRID" id="18560">
    <property type="interactions" value="1"/>
</dbReference>
<dbReference type="FunCoup" id="Q94AA9">
    <property type="interactions" value="3"/>
</dbReference>
<dbReference type="STRING" id="3702.Q94AA9"/>
<dbReference type="CAZy" id="GT47">
    <property type="family name" value="Glycosyltransferase Family 47"/>
</dbReference>
<dbReference type="GlyCosmos" id="Q94AA9">
    <property type="glycosylation" value="6 sites, No reported glycans"/>
</dbReference>
<dbReference type="GlyGen" id="Q94AA9">
    <property type="glycosylation" value="6 sites"/>
</dbReference>
<dbReference type="PaxDb" id="3702-AT5G33290.1"/>
<dbReference type="ProteomicsDB" id="242490"/>
<dbReference type="EnsemblPlants" id="AT5G33290.1">
    <property type="protein sequence ID" value="AT5G33290.1"/>
    <property type="gene ID" value="AT5G33290"/>
</dbReference>
<dbReference type="GeneID" id="833302"/>
<dbReference type="Gramene" id="AT5G33290.1">
    <property type="protein sequence ID" value="AT5G33290.1"/>
    <property type="gene ID" value="AT5G33290"/>
</dbReference>
<dbReference type="KEGG" id="ath:AT5G33290"/>
<dbReference type="Araport" id="AT5G33290"/>
<dbReference type="TAIR" id="AT5G33290">
    <property type="gene designation" value="XGD1"/>
</dbReference>
<dbReference type="eggNOG" id="KOG1021">
    <property type="taxonomic scope" value="Eukaryota"/>
</dbReference>
<dbReference type="HOGENOM" id="CLU_025166_1_4_1"/>
<dbReference type="InParanoid" id="Q94AA9"/>
<dbReference type="OMA" id="QFMDEMC"/>
<dbReference type="PhylomeDB" id="Q94AA9"/>
<dbReference type="BioCyc" id="MetaCyc:AT5G33290-MONOMER"/>
<dbReference type="BRENDA" id="2.4.2.41">
    <property type="organism ID" value="399"/>
</dbReference>
<dbReference type="PRO" id="PR:Q94AA9"/>
<dbReference type="Proteomes" id="UP000006548">
    <property type="component" value="Chromosome 5"/>
</dbReference>
<dbReference type="ExpressionAtlas" id="Q94AA9">
    <property type="expression patterns" value="baseline and differential"/>
</dbReference>
<dbReference type="GO" id="GO:0005768">
    <property type="term" value="C:endosome"/>
    <property type="evidence" value="ECO:0007005"/>
    <property type="project" value="TAIR"/>
</dbReference>
<dbReference type="GO" id="GO:0005794">
    <property type="term" value="C:Golgi apparatus"/>
    <property type="evidence" value="ECO:0000314"/>
    <property type="project" value="TAIR"/>
</dbReference>
<dbReference type="GO" id="GO:0000139">
    <property type="term" value="C:Golgi membrane"/>
    <property type="evidence" value="ECO:0007669"/>
    <property type="project" value="UniProtKB-SubCell"/>
</dbReference>
<dbReference type="GO" id="GO:0005802">
    <property type="term" value="C:trans-Golgi network"/>
    <property type="evidence" value="ECO:0007005"/>
    <property type="project" value="TAIR"/>
</dbReference>
<dbReference type="GO" id="GO:0035252">
    <property type="term" value="F:UDP-xylosyltransferase activity"/>
    <property type="evidence" value="ECO:0000314"/>
    <property type="project" value="TAIR"/>
</dbReference>
<dbReference type="GO" id="GO:0102983">
    <property type="term" value="F:xylogalacturonan beta-1,3-xylosyltransferase activity"/>
    <property type="evidence" value="ECO:0007669"/>
    <property type="project" value="UniProtKB-EC"/>
</dbReference>
<dbReference type="GO" id="GO:0071555">
    <property type="term" value="P:cell wall organization"/>
    <property type="evidence" value="ECO:0007669"/>
    <property type="project" value="UniProtKB-KW"/>
</dbReference>
<dbReference type="GO" id="GO:0045489">
    <property type="term" value="P:pectin biosynthetic process"/>
    <property type="evidence" value="ECO:0000315"/>
    <property type="project" value="TAIR"/>
</dbReference>
<dbReference type="GO" id="GO:0006486">
    <property type="term" value="P:protein glycosylation"/>
    <property type="evidence" value="ECO:0007669"/>
    <property type="project" value="InterPro"/>
</dbReference>
<dbReference type="GO" id="GO:0010398">
    <property type="term" value="P:xylogalacturonan metabolic process"/>
    <property type="evidence" value="ECO:0000315"/>
    <property type="project" value="TAIR"/>
</dbReference>
<dbReference type="InterPro" id="IPR004263">
    <property type="entry name" value="Exostosin"/>
</dbReference>
<dbReference type="InterPro" id="IPR040911">
    <property type="entry name" value="Exostosin_GT47"/>
</dbReference>
<dbReference type="PANTHER" id="PTHR11062">
    <property type="entry name" value="EXOSTOSIN HEPARAN SULFATE GLYCOSYLTRANSFERASE -RELATED"/>
    <property type="match status" value="1"/>
</dbReference>
<dbReference type="PANTHER" id="PTHR11062:SF124">
    <property type="entry name" value="XYLOGALACTURONAN BETA-1,3-XYLOSYLTRANSFERASE"/>
    <property type="match status" value="1"/>
</dbReference>
<dbReference type="Pfam" id="PF03016">
    <property type="entry name" value="Exostosin_GT47"/>
    <property type="match status" value="1"/>
</dbReference>
<keyword id="KW-0961">Cell wall biogenesis/degradation</keyword>
<keyword id="KW-0325">Glycoprotein</keyword>
<keyword id="KW-0328">Glycosyltransferase</keyword>
<keyword id="KW-0333">Golgi apparatus</keyword>
<keyword id="KW-0472">Membrane</keyword>
<keyword id="KW-1185">Reference proteome</keyword>
<keyword id="KW-0735">Signal-anchor</keyword>
<keyword id="KW-0808">Transferase</keyword>
<keyword id="KW-0812">Transmembrane</keyword>
<keyword id="KW-1133">Transmembrane helix</keyword>
<sequence>MAAPRSRRCSLSLLTLFSITLILISVSLFVSTKPANKPFLDYRNQFSISISISSPLEQNTTNTSFVSASPPLSPLGQSNTTNTILASSSSSSSFSDHQNQNKSPSPTSKKIVIRKRSGLDKIESDLAKARAAIKKAASTQNYVSSLYKNPAAFHQSHTEMMNRFKVWTYTEGEVPLFHDGPVNDIYGIEGQFMDEMCVDGPKSRSRFRADRPENAHVFFIPFSVAKVIHFVYKPITSVEGFSRARLHRLIEDYVDVVATKHPYWNRSQGGDHFMVSCHDWAPDVIDGNPKLFEKFIRGLCNANTSEGFRPNVDVSIPEIYLPKGKLGPSFLGKSPRVRSILAFFAGRSHGEIRKILFQHWKEMDNEVQVYDRLPPGKDYTKTMGMSKFCLCPSGWEVASPREVEAIYAGCVPVIISDNYSLPFSDVLNWDSFSIQIPVSRIKEIKTILQSVSLVRYLKMYKRVLEVKQHFVLNRPAKPYDVMHMMLHSIWLRRLNLRLGT</sequence>
<protein>
    <recommendedName>
        <fullName>Xylogalacturonan beta-1,3-xylosyltransferase</fullName>
        <ecNumber>2.4.2.41</ecNumber>
    </recommendedName>
    <alternativeName>
        <fullName>Protein XYLOGALACTURONAN DEFICIENT 1</fullName>
    </alternativeName>
</protein>
<accession>Q94AA9</accession>
<feature type="chain" id="PRO_0000392291" description="Xylogalacturonan beta-1,3-xylosyltransferase">
    <location>
        <begin position="1"/>
        <end position="500"/>
    </location>
</feature>
<feature type="topological domain" description="Cytoplasmic" evidence="1">
    <location>
        <begin position="1"/>
        <end position="9"/>
    </location>
</feature>
<feature type="transmembrane region" description="Helical; Signal-anchor for type II membrane protein" evidence="1">
    <location>
        <begin position="10"/>
        <end position="30"/>
    </location>
</feature>
<feature type="topological domain" description="Lumenal" evidence="1">
    <location>
        <begin position="31"/>
        <end position="500"/>
    </location>
</feature>
<feature type="region of interest" description="Disordered" evidence="2">
    <location>
        <begin position="62"/>
        <end position="110"/>
    </location>
</feature>
<feature type="compositionally biased region" description="Polar residues" evidence="2">
    <location>
        <begin position="75"/>
        <end position="86"/>
    </location>
</feature>
<feature type="compositionally biased region" description="Polar residues" evidence="2">
    <location>
        <begin position="96"/>
        <end position="108"/>
    </location>
</feature>
<feature type="glycosylation site" description="N-linked (GlcNAc...) asparagine" evidence="1">
    <location>
        <position position="59"/>
    </location>
</feature>
<feature type="glycosylation site" description="N-linked (GlcNAc...) asparagine" evidence="1">
    <location>
        <position position="62"/>
    </location>
</feature>
<feature type="glycosylation site" description="N-linked (GlcNAc...) asparagine" evidence="1">
    <location>
        <position position="79"/>
    </location>
</feature>
<feature type="glycosylation site" description="N-linked (GlcNAc...) asparagine" evidence="1">
    <location>
        <position position="265"/>
    </location>
</feature>
<feature type="glycosylation site" description="N-linked (GlcNAc...) asparagine" evidence="1">
    <location>
        <position position="303"/>
    </location>
</feature>
<feature type="glycosylation site" description="N-linked (GlcNAc...) asparagine" evidence="1">
    <location>
        <position position="418"/>
    </location>
</feature>
<feature type="mutagenesis site" description="In xgd1-2; loss of activity." evidence="3">
    <original>VLNRPAKPYDVMHMMLHSIWLRRLNLRLGT</original>
    <variation>LIKLTNCGGPKKKKKKKKKK</variation>
    <location>
        <begin position="471"/>
        <end position="500"/>
    </location>
</feature>
<feature type="sequence conflict" description="In Ref. 4; BX831739." evidence="4" ref="4">
    <original>N</original>
    <variation>D</variation>
    <location>
        <position position="59"/>
    </location>
</feature>
<feature type="sequence conflict" description="In Ref. 4; BX831739." evidence="4" ref="4">
    <original>K</original>
    <variation>E</variation>
    <location>
        <position position="102"/>
    </location>
</feature>
<feature type="sequence conflict" description="In Ref. 4; BX831739." evidence="4" ref="4">
    <original>KI</original>
    <variation>RV</variation>
    <location>
        <begin position="110"/>
        <end position="111"/>
    </location>
</feature>
<feature type="sequence conflict" description="In Ref. 4; BX831739." evidence="4" ref="4">
    <original>D</original>
    <variation>E</variation>
    <location>
        <position position="210"/>
    </location>
</feature>
<feature type="sequence conflict" description="In Ref. 3; AAL62020/AAK83577." evidence="4" ref="3">
    <original>V</original>
    <variation>E</variation>
    <location>
        <position position="284"/>
    </location>
</feature>
<reference key="1">
    <citation type="journal article" date="2000" name="Nature">
        <title>Sequence and analysis of chromosome 5 of the plant Arabidopsis thaliana.</title>
        <authorList>
            <person name="Tabata S."/>
            <person name="Kaneko T."/>
            <person name="Nakamura Y."/>
            <person name="Kotani H."/>
            <person name="Kato T."/>
            <person name="Asamizu E."/>
            <person name="Miyajima N."/>
            <person name="Sasamoto S."/>
            <person name="Kimura T."/>
            <person name="Hosouchi T."/>
            <person name="Kawashima K."/>
            <person name="Kohara M."/>
            <person name="Matsumoto M."/>
            <person name="Matsuno A."/>
            <person name="Muraki A."/>
            <person name="Nakayama S."/>
            <person name="Nakazaki N."/>
            <person name="Naruo K."/>
            <person name="Okumura S."/>
            <person name="Shinpo S."/>
            <person name="Takeuchi C."/>
            <person name="Wada T."/>
            <person name="Watanabe A."/>
            <person name="Yamada M."/>
            <person name="Yasuda M."/>
            <person name="Sato S."/>
            <person name="de la Bastide M."/>
            <person name="Huang E."/>
            <person name="Spiegel L."/>
            <person name="Gnoj L."/>
            <person name="O'Shaughnessy A."/>
            <person name="Preston R."/>
            <person name="Habermann K."/>
            <person name="Murray J."/>
            <person name="Johnson D."/>
            <person name="Rohlfing T."/>
            <person name="Nelson J."/>
            <person name="Stoneking T."/>
            <person name="Pepin K."/>
            <person name="Spieth J."/>
            <person name="Sekhon M."/>
            <person name="Armstrong J."/>
            <person name="Becker M."/>
            <person name="Belter E."/>
            <person name="Cordum H."/>
            <person name="Cordes M."/>
            <person name="Courtney L."/>
            <person name="Courtney W."/>
            <person name="Dante M."/>
            <person name="Du H."/>
            <person name="Edwards J."/>
            <person name="Fryman J."/>
            <person name="Haakensen B."/>
            <person name="Lamar E."/>
            <person name="Latreille P."/>
            <person name="Leonard S."/>
            <person name="Meyer R."/>
            <person name="Mulvaney E."/>
            <person name="Ozersky P."/>
            <person name="Riley A."/>
            <person name="Strowmatt C."/>
            <person name="Wagner-McPherson C."/>
            <person name="Wollam A."/>
            <person name="Yoakum M."/>
            <person name="Bell M."/>
            <person name="Dedhia N."/>
            <person name="Parnell L."/>
            <person name="Shah R."/>
            <person name="Rodriguez M."/>
            <person name="Hoon See L."/>
            <person name="Vil D."/>
            <person name="Baker J."/>
            <person name="Kirchoff K."/>
            <person name="Toth K."/>
            <person name="King L."/>
            <person name="Bahret A."/>
            <person name="Miller B."/>
            <person name="Marra M.A."/>
            <person name="Martienssen R."/>
            <person name="McCombie W.R."/>
            <person name="Wilson R.K."/>
            <person name="Murphy G."/>
            <person name="Bancroft I."/>
            <person name="Volckaert G."/>
            <person name="Wambutt R."/>
            <person name="Duesterhoeft A."/>
            <person name="Stiekema W."/>
            <person name="Pohl T."/>
            <person name="Entian K.-D."/>
            <person name="Terryn N."/>
            <person name="Hartley N."/>
            <person name="Bent E."/>
            <person name="Johnson S."/>
            <person name="Langham S.-A."/>
            <person name="McCullagh B."/>
            <person name="Robben J."/>
            <person name="Grymonprez B."/>
            <person name="Zimmermann W."/>
            <person name="Ramsperger U."/>
            <person name="Wedler H."/>
            <person name="Balke K."/>
            <person name="Wedler E."/>
            <person name="Peters S."/>
            <person name="van Staveren M."/>
            <person name="Dirkse W."/>
            <person name="Mooijman P."/>
            <person name="Klein Lankhorst R."/>
            <person name="Weitzenegger T."/>
            <person name="Bothe G."/>
            <person name="Rose M."/>
            <person name="Hauf J."/>
            <person name="Berneiser S."/>
            <person name="Hempel S."/>
            <person name="Feldpausch M."/>
            <person name="Lamberth S."/>
            <person name="Villarroel R."/>
            <person name="Gielen J."/>
            <person name="Ardiles W."/>
            <person name="Bents O."/>
            <person name="Lemcke K."/>
            <person name="Kolesov G."/>
            <person name="Mayer K.F.X."/>
            <person name="Rudd S."/>
            <person name="Schoof H."/>
            <person name="Schueller C."/>
            <person name="Zaccaria P."/>
            <person name="Mewes H.-W."/>
            <person name="Bevan M."/>
            <person name="Fransz P.F."/>
        </authorList>
    </citation>
    <scope>NUCLEOTIDE SEQUENCE [LARGE SCALE GENOMIC DNA]</scope>
    <source>
        <strain>cv. Columbia</strain>
    </source>
</reference>
<reference key="2">
    <citation type="journal article" date="2017" name="Plant J.">
        <title>Araport11: a complete reannotation of the Arabidopsis thaliana reference genome.</title>
        <authorList>
            <person name="Cheng C.Y."/>
            <person name="Krishnakumar V."/>
            <person name="Chan A.P."/>
            <person name="Thibaud-Nissen F."/>
            <person name="Schobel S."/>
            <person name="Town C.D."/>
        </authorList>
    </citation>
    <scope>GENOME REANNOTATION</scope>
    <source>
        <strain>cv. Columbia</strain>
    </source>
</reference>
<reference key="3">
    <citation type="journal article" date="2003" name="Science">
        <title>Empirical analysis of transcriptional activity in the Arabidopsis genome.</title>
        <authorList>
            <person name="Yamada K."/>
            <person name="Lim J."/>
            <person name="Dale J.M."/>
            <person name="Chen H."/>
            <person name="Shinn P."/>
            <person name="Palm C.J."/>
            <person name="Southwick A.M."/>
            <person name="Wu H.C."/>
            <person name="Kim C.J."/>
            <person name="Nguyen M."/>
            <person name="Pham P.K."/>
            <person name="Cheuk R.F."/>
            <person name="Karlin-Newmann G."/>
            <person name="Liu S.X."/>
            <person name="Lam B."/>
            <person name="Sakano H."/>
            <person name="Wu T."/>
            <person name="Yu G."/>
            <person name="Miranda M."/>
            <person name="Quach H.L."/>
            <person name="Tripp M."/>
            <person name="Chang C.H."/>
            <person name="Lee J.M."/>
            <person name="Toriumi M.J."/>
            <person name="Chan M.M."/>
            <person name="Tang C.C."/>
            <person name="Onodera C.S."/>
            <person name="Deng J.M."/>
            <person name="Akiyama K."/>
            <person name="Ansari Y."/>
            <person name="Arakawa T."/>
            <person name="Banh J."/>
            <person name="Banno F."/>
            <person name="Bowser L."/>
            <person name="Brooks S.Y."/>
            <person name="Carninci P."/>
            <person name="Chao Q."/>
            <person name="Choy N."/>
            <person name="Enju A."/>
            <person name="Goldsmith A.D."/>
            <person name="Gurjal M."/>
            <person name="Hansen N.F."/>
            <person name="Hayashizaki Y."/>
            <person name="Johnson-Hopson C."/>
            <person name="Hsuan V.W."/>
            <person name="Iida K."/>
            <person name="Karnes M."/>
            <person name="Khan S."/>
            <person name="Koesema E."/>
            <person name="Ishida J."/>
            <person name="Jiang P.X."/>
            <person name="Jones T."/>
            <person name="Kawai J."/>
            <person name="Kamiya A."/>
            <person name="Meyers C."/>
            <person name="Nakajima M."/>
            <person name="Narusaka M."/>
            <person name="Seki M."/>
            <person name="Sakurai T."/>
            <person name="Satou M."/>
            <person name="Tamse R."/>
            <person name="Vaysberg M."/>
            <person name="Wallender E.K."/>
            <person name="Wong C."/>
            <person name="Yamamura Y."/>
            <person name="Yuan S."/>
            <person name="Shinozaki K."/>
            <person name="Davis R.W."/>
            <person name="Theologis A."/>
            <person name="Ecker J.R."/>
        </authorList>
    </citation>
    <scope>NUCLEOTIDE SEQUENCE [LARGE SCALE MRNA]</scope>
    <source>
        <strain>cv. Columbia</strain>
    </source>
</reference>
<reference key="4">
    <citation type="journal article" date="2004" name="Genome Res.">
        <title>Whole genome sequence comparisons and 'full-length' cDNA sequences: a combined approach to evaluate and improve Arabidopsis genome annotation.</title>
        <authorList>
            <person name="Castelli V."/>
            <person name="Aury J.-M."/>
            <person name="Jaillon O."/>
            <person name="Wincker P."/>
            <person name="Clepet C."/>
            <person name="Menard M."/>
            <person name="Cruaud C."/>
            <person name="Quetier F."/>
            <person name="Scarpelli C."/>
            <person name="Schaechter V."/>
            <person name="Temple G."/>
            <person name="Caboche M."/>
            <person name="Weissenbach J."/>
            <person name="Salanoubat M."/>
        </authorList>
    </citation>
    <scope>NUCLEOTIDE SEQUENCE [LARGE SCALE MRNA]</scope>
    <source>
        <strain>cv. Columbia</strain>
    </source>
</reference>
<reference key="5">
    <citation type="journal article" date="2008" name="Plant Cell">
        <title>Identification of a xylogalacturonan xylosyltransferase involved in pectin biosynthesis in Arabidopsis.</title>
        <authorList>
            <person name="Jensen J.K."/>
            <person name="Sorensen S.O."/>
            <person name="Harholt J."/>
            <person name="Geshi N."/>
            <person name="Sakuragi Y."/>
            <person name="Moller I."/>
            <person name="Zandleven J."/>
            <person name="Bernal A.J."/>
            <person name="Jensen N.B."/>
            <person name="Sorensen C."/>
            <person name="Pauly M."/>
            <person name="Beldman G."/>
            <person name="Willats W.G."/>
            <person name="Scheller H.V."/>
        </authorList>
    </citation>
    <scope>FUNCTION</scope>
    <scope>CATALYTIC ACTIVITY</scope>
    <scope>TISSUE SPECIFICITY</scope>
    <scope>INDUCTION</scope>
    <scope>MUTAGENESIS OF 471-VAL--THR-500</scope>
    <scope>DISRUPTION PHENOTYPE</scope>
</reference>
<gene>
    <name type="primary">XGD1</name>
    <name type="ordered locus">At5g33290</name>
    <name type="ORF">F19N2.10</name>
</gene>
<organism>
    <name type="scientific">Arabidopsis thaliana</name>
    <name type="common">Mouse-ear cress</name>
    <dbReference type="NCBI Taxonomy" id="3702"/>
    <lineage>
        <taxon>Eukaryota</taxon>
        <taxon>Viridiplantae</taxon>
        <taxon>Streptophyta</taxon>
        <taxon>Embryophyta</taxon>
        <taxon>Tracheophyta</taxon>
        <taxon>Spermatophyta</taxon>
        <taxon>Magnoliopsida</taxon>
        <taxon>eudicotyledons</taxon>
        <taxon>Gunneridae</taxon>
        <taxon>Pentapetalae</taxon>
        <taxon>rosids</taxon>
        <taxon>malvids</taxon>
        <taxon>Brassicales</taxon>
        <taxon>Brassicaceae</taxon>
        <taxon>Camelineae</taxon>
        <taxon>Arabidopsis</taxon>
    </lineage>
</organism>
<comment type="function">
    <text evidence="3">Involved in pectin biosynthesis. Catalyzes the transfer of xylose from UDP-xylose onto oligogalacturonides and endogenous acceptors.</text>
</comment>
<comment type="catalytic activity">
    <reaction evidence="3">
        <text>Transfers a xylosyl residue from UDP-D-xylose to a D-galactose residue in xylogalacturonan, forming a beta-1,3-D-xylosyl-D-galactose linkage.</text>
        <dbReference type="EC" id="2.4.2.41"/>
    </reaction>
</comment>
<comment type="subcellular location">
    <subcellularLocation>
        <location>Golgi apparatus membrane</location>
        <topology>Single-pass type II membrane protein</topology>
    </subcellularLocation>
</comment>
<comment type="tissue specificity">
    <text evidence="3">Highly expressed in adult leaves. Lower levels in young leaves, stems and roots.</text>
</comment>
<comment type="induction">
    <text evidence="3">Up-regulated by biotic and abiotic stresses and senescence. Down-regulated by cytokinin and nematodes or Agrobacterium infection.</text>
</comment>
<comment type="disruption phenotype">
    <text evidence="3">Decreased cell wall xylose.</text>
</comment>
<comment type="similarity">
    <text evidence="4">Belongs to the glycosyltransferase 47 family.</text>
</comment>
<comment type="sequence caution" evidence="4">
    <conflict type="miscellaneous discrepancy">
        <sequence resource="EMBL-CDS" id="AAK83577"/>
    </conflict>
    <text>Intron retention.</text>
</comment>
<comment type="sequence caution" evidence="4">
    <conflict type="frameshift">
        <sequence resource="EMBL" id="BX831739"/>
    </conflict>
</comment>
<name>XGD1_ARATH</name>
<evidence type="ECO:0000255" key="1"/>
<evidence type="ECO:0000256" key="2">
    <source>
        <dbReference type="SAM" id="MobiDB-lite"/>
    </source>
</evidence>
<evidence type="ECO:0000269" key="3">
    <source>
    </source>
</evidence>
<evidence type="ECO:0000305" key="4"/>
<proteinExistence type="evidence at protein level"/>